<reference key="1">
    <citation type="journal article" date="2003" name="Proc. Natl. Acad. Sci. U.S.A.">
        <title>The complete genome sequence of Mycobacterium bovis.</title>
        <authorList>
            <person name="Garnier T."/>
            <person name="Eiglmeier K."/>
            <person name="Camus J.-C."/>
            <person name="Medina N."/>
            <person name="Mansoor H."/>
            <person name="Pryor M."/>
            <person name="Duthoy S."/>
            <person name="Grondin S."/>
            <person name="Lacroix C."/>
            <person name="Monsempe C."/>
            <person name="Simon S."/>
            <person name="Harris B."/>
            <person name="Atkin R."/>
            <person name="Doggett J."/>
            <person name="Mayes R."/>
            <person name="Keating L."/>
            <person name="Wheeler P.R."/>
            <person name="Parkhill J."/>
            <person name="Barrell B.G."/>
            <person name="Cole S.T."/>
            <person name="Gordon S.V."/>
            <person name="Hewinson R.G."/>
        </authorList>
    </citation>
    <scope>NUCLEOTIDE SEQUENCE [LARGE SCALE GENOMIC DNA]</scope>
    <source>
        <strain>ATCC BAA-935 / AF2122/97</strain>
    </source>
</reference>
<reference key="2">
    <citation type="journal article" date="2017" name="Genome Announc.">
        <title>Updated reference genome sequence and annotation of Mycobacterium bovis AF2122/97.</title>
        <authorList>
            <person name="Malone K.M."/>
            <person name="Farrell D."/>
            <person name="Stuber T.P."/>
            <person name="Schubert O.T."/>
            <person name="Aebersold R."/>
            <person name="Robbe-Austerman S."/>
            <person name="Gordon S.V."/>
        </authorList>
    </citation>
    <scope>NUCLEOTIDE SEQUENCE [LARGE SCALE GENOMIC DNA]</scope>
    <scope>GENOME REANNOTATION</scope>
    <source>
        <strain>ATCC BAA-935 / AF2122/97</strain>
    </source>
</reference>
<feature type="chain" id="PRO_0000170571" description="Guanylate kinase">
    <location>
        <begin position="1"/>
        <end position="208"/>
    </location>
</feature>
<feature type="domain" description="Guanylate kinase-like">
    <location>
        <begin position="21"/>
        <end position="201"/>
    </location>
</feature>
<feature type="binding site" evidence="1">
    <location>
        <begin position="28"/>
        <end position="35"/>
    </location>
    <ligand>
        <name>ATP</name>
        <dbReference type="ChEBI" id="CHEBI:30616"/>
    </ligand>
</feature>
<proteinExistence type="inferred from homology"/>
<protein>
    <recommendedName>
        <fullName>Guanylate kinase</fullName>
        <ecNumber>2.7.4.8</ecNumber>
    </recommendedName>
    <alternativeName>
        <fullName>GMP kinase</fullName>
    </alternativeName>
</protein>
<evidence type="ECO:0000250" key="1"/>
<evidence type="ECO:0000305" key="2"/>
<dbReference type="EC" id="2.7.4.8"/>
<dbReference type="EMBL" id="LT708304">
    <property type="protein sequence ID" value="SIU00027.1"/>
    <property type="molecule type" value="Genomic_DNA"/>
</dbReference>
<dbReference type="RefSeq" id="NP_855076.1">
    <property type="nucleotide sequence ID" value="NC_002945.3"/>
</dbReference>
<dbReference type="RefSeq" id="WP_003900331.1">
    <property type="nucleotide sequence ID" value="NC_002945.4"/>
</dbReference>
<dbReference type="SMR" id="P0A5I5"/>
<dbReference type="GeneID" id="45425367"/>
<dbReference type="KEGG" id="mbo:BQ2027_MB1424"/>
<dbReference type="PATRIC" id="fig|233413.5.peg.1559"/>
<dbReference type="Proteomes" id="UP000001419">
    <property type="component" value="Chromosome"/>
</dbReference>
<dbReference type="GO" id="GO:0005829">
    <property type="term" value="C:cytosol"/>
    <property type="evidence" value="ECO:0007669"/>
    <property type="project" value="TreeGrafter"/>
</dbReference>
<dbReference type="GO" id="GO:0005524">
    <property type="term" value="F:ATP binding"/>
    <property type="evidence" value="ECO:0007669"/>
    <property type="project" value="UniProtKB-UniRule"/>
</dbReference>
<dbReference type="GO" id="GO:0004385">
    <property type="term" value="F:guanylate kinase activity"/>
    <property type="evidence" value="ECO:0007669"/>
    <property type="project" value="UniProtKB-UniRule"/>
</dbReference>
<dbReference type="CDD" id="cd00071">
    <property type="entry name" value="GMPK"/>
    <property type="match status" value="1"/>
</dbReference>
<dbReference type="FunFam" id="3.30.63.10:FF:000002">
    <property type="entry name" value="Guanylate kinase 1"/>
    <property type="match status" value="1"/>
</dbReference>
<dbReference type="Gene3D" id="3.30.63.10">
    <property type="entry name" value="Guanylate Kinase phosphate binding domain"/>
    <property type="match status" value="1"/>
</dbReference>
<dbReference type="Gene3D" id="3.40.50.300">
    <property type="entry name" value="P-loop containing nucleotide triphosphate hydrolases"/>
    <property type="match status" value="1"/>
</dbReference>
<dbReference type="HAMAP" id="MF_00328">
    <property type="entry name" value="Guanylate_kinase"/>
    <property type="match status" value="1"/>
</dbReference>
<dbReference type="InterPro" id="IPR008145">
    <property type="entry name" value="GK/Ca_channel_bsu"/>
</dbReference>
<dbReference type="InterPro" id="IPR008144">
    <property type="entry name" value="Guanylate_kin-like_dom"/>
</dbReference>
<dbReference type="InterPro" id="IPR017665">
    <property type="entry name" value="Guanylate_kinase"/>
</dbReference>
<dbReference type="InterPro" id="IPR020590">
    <property type="entry name" value="Guanylate_kinase_CS"/>
</dbReference>
<dbReference type="InterPro" id="IPR027417">
    <property type="entry name" value="P-loop_NTPase"/>
</dbReference>
<dbReference type="NCBIfam" id="TIGR03263">
    <property type="entry name" value="guanyl_kin"/>
    <property type="match status" value="1"/>
</dbReference>
<dbReference type="PANTHER" id="PTHR23117:SF13">
    <property type="entry name" value="GUANYLATE KINASE"/>
    <property type="match status" value="1"/>
</dbReference>
<dbReference type="PANTHER" id="PTHR23117">
    <property type="entry name" value="GUANYLATE KINASE-RELATED"/>
    <property type="match status" value="1"/>
</dbReference>
<dbReference type="Pfam" id="PF00625">
    <property type="entry name" value="Guanylate_kin"/>
    <property type="match status" value="1"/>
</dbReference>
<dbReference type="SMART" id="SM00072">
    <property type="entry name" value="GuKc"/>
    <property type="match status" value="1"/>
</dbReference>
<dbReference type="SUPFAM" id="SSF52540">
    <property type="entry name" value="P-loop containing nucleoside triphosphate hydrolases"/>
    <property type="match status" value="1"/>
</dbReference>
<dbReference type="PROSITE" id="PS00856">
    <property type="entry name" value="GUANYLATE_KINASE_1"/>
    <property type="match status" value="1"/>
</dbReference>
<dbReference type="PROSITE" id="PS50052">
    <property type="entry name" value="GUANYLATE_KINASE_2"/>
    <property type="match status" value="1"/>
</dbReference>
<gene>
    <name type="primary">gmk</name>
    <name type="ordered locus">BQ2027_MB1424</name>
</gene>
<sequence length="208" mass="22095">MSVGEGPDTKPTARGQPAAVGRVVVLSGPSAVGKSTVVRCLRERIPNLHFSVSATTRAPRPGEVDGVDYHFIDPTRFQQLIDQGELLEWAEIHGGLHRSGTLAQPVRAAAATGVPVLIEVDLAGARAIKKTMPEAVTVFLAPPSWQDLQARLIGRGTETADVIQRRLDTARIELAAQGDFDKVVVNRRLESACAELVSLLVGTAPGSP</sequence>
<name>KGUA_MYCBO</name>
<organism>
    <name type="scientific">Mycobacterium bovis (strain ATCC BAA-935 / AF2122/97)</name>
    <dbReference type="NCBI Taxonomy" id="233413"/>
    <lineage>
        <taxon>Bacteria</taxon>
        <taxon>Bacillati</taxon>
        <taxon>Actinomycetota</taxon>
        <taxon>Actinomycetes</taxon>
        <taxon>Mycobacteriales</taxon>
        <taxon>Mycobacteriaceae</taxon>
        <taxon>Mycobacterium</taxon>
        <taxon>Mycobacterium tuberculosis complex</taxon>
    </lineage>
</organism>
<comment type="function">
    <text evidence="1">Essential for recycling GMP and indirectly, cGMP.</text>
</comment>
<comment type="catalytic activity">
    <reaction>
        <text>GMP + ATP = GDP + ADP</text>
        <dbReference type="Rhea" id="RHEA:20780"/>
        <dbReference type="ChEBI" id="CHEBI:30616"/>
        <dbReference type="ChEBI" id="CHEBI:58115"/>
        <dbReference type="ChEBI" id="CHEBI:58189"/>
        <dbReference type="ChEBI" id="CHEBI:456216"/>
        <dbReference type="EC" id="2.7.4.8"/>
    </reaction>
</comment>
<comment type="subcellular location">
    <subcellularLocation>
        <location evidence="1">Cytoplasm</location>
    </subcellularLocation>
</comment>
<comment type="similarity">
    <text evidence="2">Belongs to the guanylate kinase family.</text>
</comment>
<keyword id="KW-0067">ATP-binding</keyword>
<keyword id="KW-0963">Cytoplasm</keyword>
<keyword id="KW-0418">Kinase</keyword>
<keyword id="KW-0547">Nucleotide-binding</keyword>
<keyword id="KW-1185">Reference proteome</keyword>
<keyword id="KW-0808">Transferase</keyword>
<accession>P0A5I5</accession>
<accession>A0A1R3XY83</accession>
<accession>P71659</accession>
<accession>X2BHH9</accession>